<organism>
    <name type="scientific">Salinispora arenicola (strain CNS-205)</name>
    <dbReference type="NCBI Taxonomy" id="391037"/>
    <lineage>
        <taxon>Bacteria</taxon>
        <taxon>Bacillati</taxon>
        <taxon>Actinomycetota</taxon>
        <taxon>Actinomycetes</taxon>
        <taxon>Micromonosporales</taxon>
        <taxon>Micromonosporaceae</taxon>
        <taxon>Salinispora</taxon>
    </lineage>
</organism>
<keyword id="KW-0067">ATP-binding</keyword>
<keyword id="KW-0436">Ligase</keyword>
<keyword id="KW-0460">Magnesium</keyword>
<keyword id="KW-0479">Metal-binding</keyword>
<keyword id="KW-0547">Nucleotide-binding</keyword>
<keyword id="KW-0833">Ubl conjugation pathway</keyword>
<evidence type="ECO:0000255" key="1">
    <source>
        <dbReference type="HAMAP-Rule" id="MF_02111"/>
    </source>
</evidence>
<reference key="1">
    <citation type="submission" date="2007-10" db="EMBL/GenBank/DDBJ databases">
        <title>Complete sequence of Salinispora arenicola CNS-205.</title>
        <authorList>
            <consortium name="US DOE Joint Genome Institute"/>
            <person name="Copeland A."/>
            <person name="Lucas S."/>
            <person name="Lapidus A."/>
            <person name="Barry K."/>
            <person name="Glavina del Rio T."/>
            <person name="Dalin E."/>
            <person name="Tice H."/>
            <person name="Pitluck S."/>
            <person name="Foster B."/>
            <person name="Schmutz J."/>
            <person name="Larimer F."/>
            <person name="Land M."/>
            <person name="Hauser L."/>
            <person name="Kyrpides N."/>
            <person name="Ivanova N."/>
            <person name="Jensen P.R."/>
            <person name="Moore B.S."/>
            <person name="Penn K."/>
            <person name="Jenkins C."/>
            <person name="Udwary D."/>
            <person name="Xiang L."/>
            <person name="Gontang E."/>
            <person name="Richardson P."/>
        </authorList>
    </citation>
    <scope>NUCLEOTIDE SEQUENCE [LARGE SCALE GENOMIC DNA]</scope>
    <source>
        <strain>CNS-205</strain>
    </source>
</reference>
<comment type="function">
    <text evidence="1">Catalyzes the covalent attachment of the prokaryotic ubiquitin-like protein modifier Pup to the proteasomal substrate proteins, thereby targeting them for proteasomal degradation. This tagging system is termed pupylation. The ligation reaction involves the side-chain carboxylate of the C-terminal glutamate of Pup and the side-chain amino group of a substrate lysine.</text>
</comment>
<comment type="catalytic activity">
    <reaction evidence="1">
        <text>ATP + [prokaryotic ubiquitin-like protein]-L-glutamate + [protein]-L-lysine = ADP + phosphate + N(6)-([prokaryotic ubiquitin-like protein]-gamma-L-glutamyl)-[protein]-L-lysine.</text>
        <dbReference type="EC" id="6.3.1.19"/>
    </reaction>
</comment>
<comment type="pathway">
    <text evidence="1">Protein degradation; proteasomal Pup-dependent pathway.</text>
</comment>
<comment type="pathway">
    <text evidence="1">Protein modification; protein pupylation.</text>
</comment>
<comment type="miscellaneous">
    <text evidence="1">The reaction mechanism probably proceeds via the activation of Pup by phosphorylation of its C-terminal glutamate, which is then subject to nucleophilic attack by the substrate lysine, resulting in an isopeptide bond and the release of phosphate as a good leaving group.</text>
</comment>
<comment type="similarity">
    <text evidence="1">Belongs to the Pup ligase/Pup deamidase family. Pup-conjugating enzyme subfamily.</text>
</comment>
<gene>
    <name evidence="1" type="primary">pafA</name>
    <name type="ordered locus">Sare_2364</name>
</gene>
<proteinExistence type="inferred from homology"/>
<sequence length="452" mass="51648">MERRIFGLETEYGVTCTYRGQRRLSPDEVARYLFRRVVSWGRSSNVFLRNGARLYLDVGSHPEYATPECDSVADLVAHDRAGERILEGLLVDAEKRLHDEGIAGEIYLFKNNTDSAGNSYGCHENYLVSRHGEFGRLADVLIPFLVTRQLICGAGKVLQTPRGAVYCLSQRAEHIWEGVSSATTRSRPIINTRDEPHADAERYRRLHVIVGDSNMNEVTTLLKVGAADIVLRMIESGVVMRDLTLENPIRAIREVSHDITGRRKVRLASGKEISALEIQQEYLAKATEFVERRGGDQTAKRVVELWGRVLRAVETGDLDPVAREIDWVTKLRLIERYQGKHDLPLSHPRVAQMDLAYHDLRRGRGLYGLLERRGQVDRAATDPEIFEAKETPPQTTRARLRGEFIRHAQEKRRDFTVDWVHLKLNDQAQRTVLCKDPFRAYDERVERLIASM</sequence>
<dbReference type="EC" id="6.3.1.19" evidence="1"/>
<dbReference type="EMBL" id="CP000850">
    <property type="protein sequence ID" value="ABV98222.1"/>
    <property type="molecule type" value="Genomic_DNA"/>
</dbReference>
<dbReference type="SMR" id="A8M2A6"/>
<dbReference type="STRING" id="391037.Sare_2364"/>
<dbReference type="MEROPS" id="U72.001"/>
<dbReference type="KEGG" id="saq:Sare_2364"/>
<dbReference type="PATRIC" id="fig|391037.6.peg.2397"/>
<dbReference type="eggNOG" id="COG0638">
    <property type="taxonomic scope" value="Bacteria"/>
</dbReference>
<dbReference type="HOGENOM" id="CLU_040524_0_1_11"/>
<dbReference type="OrthoDB" id="9760627at2"/>
<dbReference type="UniPathway" id="UPA00997"/>
<dbReference type="UniPathway" id="UPA00998"/>
<dbReference type="GO" id="GO:0005524">
    <property type="term" value="F:ATP binding"/>
    <property type="evidence" value="ECO:0007669"/>
    <property type="project" value="UniProtKB-UniRule"/>
</dbReference>
<dbReference type="GO" id="GO:0016879">
    <property type="term" value="F:ligase activity, forming carbon-nitrogen bonds"/>
    <property type="evidence" value="ECO:0007669"/>
    <property type="project" value="InterPro"/>
</dbReference>
<dbReference type="GO" id="GO:0000287">
    <property type="term" value="F:magnesium ion binding"/>
    <property type="evidence" value="ECO:0007669"/>
    <property type="project" value="UniProtKB-UniRule"/>
</dbReference>
<dbReference type="GO" id="GO:0019787">
    <property type="term" value="F:ubiquitin-like protein transferase activity"/>
    <property type="evidence" value="ECO:0007669"/>
    <property type="project" value="UniProtKB-UniRule"/>
</dbReference>
<dbReference type="GO" id="GO:0019941">
    <property type="term" value="P:modification-dependent protein catabolic process"/>
    <property type="evidence" value="ECO:0007669"/>
    <property type="project" value="UniProtKB-UniRule"/>
</dbReference>
<dbReference type="GO" id="GO:0010498">
    <property type="term" value="P:proteasomal protein catabolic process"/>
    <property type="evidence" value="ECO:0007669"/>
    <property type="project" value="UniProtKB-UniRule"/>
</dbReference>
<dbReference type="GO" id="GO:0070490">
    <property type="term" value="P:protein pupylation"/>
    <property type="evidence" value="ECO:0007669"/>
    <property type="project" value="UniProtKB-UniRule"/>
</dbReference>
<dbReference type="HAMAP" id="MF_02111">
    <property type="entry name" value="Pup_ligase"/>
    <property type="match status" value="1"/>
</dbReference>
<dbReference type="InterPro" id="IPR022279">
    <property type="entry name" value="Pup_ligase"/>
</dbReference>
<dbReference type="InterPro" id="IPR004347">
    <property type="entry name" value="Pup_ligase/deamidase"/>
</dbReference>
<dbReference type="NCBIfam" id="TIGR03686">
    <property type="entry name" value="pupylate_PafA"/>
    <property type="match status" value="1"/>
</dbReference>
<dbReference type="PANTHER" id="PTHR42307">
    <property type="entry name" value="PUP DEAMIDASE/DEPUPYLASE"/>
    <property type="match status" value="1"/>
</dbReference>
<dbReference type="PANTHER" id="PTHR42307:SF3">
    <property type="entry name" value="PUP--PROTEIN LIGASE"/>
    <property type="match status" value="1"/>
</dbReference>
<dbReference type="Pfam" id="PF03136">
    <property type="entry name" value="Pup_ligase"/>
    <property type="match status" value="1"/>
</dbReference>
<dbReference type="PIRSF" id="PIRSF018077">
    <property type="entry name" value="UCP018077"/>
    <property type="match status" value="1"/>
</dbReference>
<name>PAFA_SALAI</name>
<accession>A8M2A6</accession>
<feature type="chain" id="PRO_0000395952" description="Pup--protein ligase">
    <location>
        <begin position="1"/>
        <end position="452"/>
    </location>
</feature>
<feature type="active site" description="Proton acceptor" evidence="1">
    <location>
        <position position="57"/>
    </location>
</feature>
<feature type="binding site" evidence="1">
    <location>
        <position position="9"/>
    </location>
    <ligand>
        <name>Mg(2+)</name>
        <dbReference type="ChEBI" id="CHEBI:18420"/>
    </ligand>
</feature>
<feature type="binding site" evidence="1">
    <location>
        <position position="53"/>
    </location>
    <ligand>
        <name>ATP</name>
        <dbReference type="ChEBI" id="CHEBI:30616"/>
    </ligand>
</feature>
<feature type="binding site" evidence="1">
    <location>
        <position position="55"/>
    </location>
    <ligand>
        <name>Mg(2+)</name>
        <dbReference type="ChEBI" id="CHEBI:18420"/>
    </ligand>
</feature>
<feature type="binding site" evidence="1">
    <location>
        <position position="63"/>
    </location>
    <ligand>
        <name>Mg(2+)</name>
        <dbReference type="ChEBI" id="CHEBI:18420"/>
    </ligand>
</feature>
<feature type="binding site" evidence="1">
    <location>
        <position position="66"/>
    </location>
    <ligand>
        <name>ATP</name>
        <dbReference type="ChEBI" id="CHEBI:30616"/>
    </ligand>
</feature>
<feature type="binding site" evidence="1">
    <location>
        <position position="419"/>
    </location>
    <ligand>
        <name>ATP</name>
        <dbReference type="ChEBI" id="CHEBI:30616"/>
    </ligand>
</feature>
<protein>
    <recommendedName>
        <fullName evidence="1">Pup--protein ligase</fullName>
        <ecNumber evidence="1">6.3.1.19</ecNumber>
    </recommendedName>
    <alternativeName>
        <fullName evidence="1">Proteasome accessory factor A</fullName>
    </alternativeName>
    <alternativeName>
        <fullName evidence="1">Pup-conjugating enzyme</fullName>
    </alternativeName>
</protein>